<name>KDSA_CAMJJ</name>
<sequence>MKKMILIAGPCVIESKDLIFKVAEQLKNFNENPNIEFYFKSSFDKANRTSINSFRGPGLEEGLKILQSVKDEFGMKILTDIHESNQANPVSEVADVLQIPAFLCRQTDLLVAAAKTKAKVNIKKGQFLNPSDIKYSVKKALQTRGIEDEGYEAAQKNGVFVAERGSSFGYGNLVVDMRSLVIMREFAPVIFDATHSVQMPGAAGGSSGGKSEFVEPLARAAAAVGIDGFFFETHINPCEALCDGPNMLNLTRLKNCVNTLLEIQNIIKENK</sequence>
<evidence type="ECO:0000255" key="1">
    <source>
        <dbReference type="HAMAP-Rule" id="MF_00056"/>
    </source>
</evidence>
<dbReference type="EC" id="2.5.1.55" evidence="1"/>
<dbReference type="EMBL" id="CP000538">
    <property type="protein sequence ID" value="EAQ73259.1"/>
    <property type="molecule type" value="Genomic_DNA"/>
</dbReference>
<dbReference type="RefSeq" id="WP_009882115.1">
    <property type="nucleotide sequence ID" value="NC_008787.1"/>
</dbReference>
<dbReference type="SMR" id="A1VYA4"/>
<dbReference type="KEGG" id="cjj:CJJ81176_0407"/>
<dbReference type="eggNOG" id="COG2877">
    <property type="taxonomic scope" value="Bacteria"/>
</dbReference>
<dbReference type="HOGENOM" id="CLU_036666_0_0_7"/>
<dbReference type="UniPathway" id="UPA00030"/>
<dbReference type="UniPathway" id="UPA00357">
    <property type="reaction ID" value="UER00474"/>
</dbReference>
<dbReference type="Proteomes" id="UP000000646">
    <property type="component" value="Chromosome"/>
</dbReference>
<dbReference type="GO" id="GO:0005737">
    <property type="term" value="C:cytoplasm"/>
    <property type="evidence" value="ECO:0007669"/>
    <property type="project" value="UniProtKB-SubCell"/>
</dbReference>
<dbReference type="GO" id="GO:0008676">
    <property type="term" value="F:3-deoxy-8-phosphooctulonate synthase activity"/>
    <property type="evidence" value="ECO:0007669"/>
    <property type="project" value="UniProtKB-UniRule"/>
</dbReference>
<dbReference type="GO" id="GO:0019294">
    <property type="term" value="P:keto-3-deoxy-D-manno-octulosonic acid biosynthetic process"/>
    <property type="evidence" value="ECO:0007669"/>
    <property type="project" value="UniProtKB-UniRule"/>
</dbReference>
<dbReference type="Gene3D" id="3.20.20.70">
    <property type="entry name" value="Aldolase class I"/>
    <property type="match status" value="1"/>
</dbReference>
<dbReference type="HAMAP" id="MF_00056">
    <property type="entry name" value="KDO8P_synth"/>
    <property type="match status" value="1"/>
</dbReference>
<dbReference type="InterPro" id="IPR013785">
    <property type="entry name" value="Aldolase_TIM"/>
</dbReference>
<dbReference type="InterPro" id="IPR006218">
    <property type="entry name" value="DAHP1/KDSA"/>
</dbReference>
<dbReference type="InterPro" id="IPR006269">
    <property type="entry name" value="KDO8P_synthase"/>
</dbReference>
<dbReference type="NCBIfam" id="TIGR01362">
    <property type="entry name" value="KDO8P_synth"/>
    <property type="match status" value="1"/>
</dbReference>
<dbReference type="NCBIfam" id="NF003543">
    <property type="entry name" value="PRK05198.1"/>
    <property type="match status" value="1"/>
</dbReference>
<dbReference type="PANTHER" id="PTHR21057">
    <property type="entry name" value="PHOSPHO-2-DEHYDRO-3-DEOXYHEPTONATE ALDOLASE"/>
    <property type="match status" value="1"/>
</dbReference>
<dbReference type="Pfam" id="PF00793">
    <property type="entry name" value="DAHP_synth_1"/>
    <property type="match status" value="1"/>
</dbReference>
<dbReference type="SUPFAM" id="SSF51569">
    <property type="entry name" value="Aldolase"/>
    <property type="match status" value="1"/>
</dbReference>
<protein>
    <recommendedName>
        <fullName evidence="1">2-dehydro-3-deoxyphosphooctonate aldolase</fullName>
        <ecNumber evidence="1">2.5.1.55</ecNumber>
    </recommendedName>
    <alternativeName>
        <fullName evidence="1">3-deoxy-D-manno-octulosonic acid 8-phosphate synthase</fullName>
    </alternativeName>
    <alternativeName>
        <fullName evidence="1">KDO-8-phosphate synthase</fullName>
        <shortName evidence="1">KDO 8-P synthase</shortName>
        <shortName evidence="1">KDOPS</shortName>
    </alternativeName>
    <alternativeName>
        <fullName evidence="1">Phospho-2-dehydro-3-deoxyoctonate aldolase</fullName>
    </alternativeName>
</protein>
<reference key="1">
    <citation type="submission" date="2006-12" db="EMBL/GenBank/DDBJ databases">
        <authorList>
            <person name="Fouts D.E."/>
            <person name="Nelson K.E."/>
            <person name="Sebastian Y."/>
        </authorList>
    </citation>
    <scope>NUCLEOTIDE SEQUENCE [LARGE SCALE GENOMIC DNA]</scope>
    <source>
        <strain>81-176</strain>
    </source>
</reference>
<proteinExistence type="inferred from homology"/>
<gene>
    <name evidence="1" type="primary">kdsA</name>
    <name type="ordered locus">CJJ81176_0407</name>
</gene>
<comment type="catalytic activity">
    <reaction evidence="1">
        <text>D-arabinose 5-phosphate + phosphoenolpyruvate + H2O = 3-deoxy-alpha-D-manno-2-octulosonate-8-phosphate + phosphate</text>
        <dbReference type="Rhea" id="RHEA:14053"/>
        <dbReference type="ChEBI" id="CHEBI:15377"/>
        <dbReference type="ChEBI" id="CHEBI:43474"/>
        <dbReference type="ChEBI" id="CHEBI:57693"/>
        <dbReference type="ChEBI" id="CHEBI:58702"/>
        <dbReference type="ChEBI" id="CHEBI:85985"/>
        <dbReference type="EC" id="2.5.1.55"/>
    </reaction>
</comment>
<comment type="pathway">
    <text evidence="1">Carbohydrate biosynthesis; 3-deoxy-D-manno-octulosonate biosynthesis; 3-deoxy-D-manno-octulosonate from D-ribulose 5-phosphate: step 2/3.</text>
</comment>
<comment type="pathway">
    <text evidence="1">Bacterial outer membrane biogenesis; lipopolysaccharide biosynthesis.</text>
</comment>
<comment type="subcellular location">
    <subcellularLocation>
        <location evidence="1">Cytoplasm</location>
    </subcellularLocation>
</comment>
<comment type="similarity">
    <text evidence="1">Belongs to the KdsA family.</text>
</comment>
<keyword id="KW-0963">Cytoplasm</keyword>
<keyword id="KW-0448">Lipopolysaccharide biosynthesis</keyword>
<keyword id="KW-0808">Transferase</keyword>
<organism>
    <name type="scientific">Campylobacter jejuni subsp. jejuni serotype O:23/36 (strain 81-176)</name>
    <dbReference type="NCBI Taxonomy" id="354242"/>
    <lineage>
        <taxon>Bacteria</taxon>
        <taxon>Pseudomonadati</taxon>
        <taxon>Campylobacterota</taxon>
        <taxon>Epsilonproteobacteria</taxon>
        <taxon>Campylobacterales</taxon>
        <taxon>Campylobacteraceae</taxon>
        <taxon>Campylobacter</taxon>
    </lineage>
</organism>
<accession>A1VYA4</accession>
<feature type="chain" id="PRO_0000304441" description="2-dehydro-3-deoxyphosphooctonate aldolase">
    <location>
        <begin position="1"/>
        <end position="271"/>
    </location>
</feature>